<name>Y2977_YERPA</name>
<proteinExistence type="inferred from homology"/>
<protein>
    <recommendedName>
        <fullName evidence="1">UPF0213 protein YPA_2977</fullName>
    </recommendedName>
</protein>
<organism>
    <name type="scientific">Yersinia pestis bv. Antiqua (strain Antiqua)</name>
    <dbReference type="NCBI Taxonomy" id="360102"/>
    <lineage>
        <taxon>Bacteria</taxon>
        <taxon>Pseudomonadati</taxon>
        <taxon>Pseudomonadota</taxon>
        <taxon>Gammaproteobacteria</taxon>
        <taxon>Enterobacterales</taxon>
        <taxon>Yersiniaceae</taxon>
        <taxon>Yersinia</taxon>
    </lineage>
</organism>
<accession>Q1C3N3</accession>
<comment type="similarity">
    <text evidence="1">Belongs to the UPF0213 family.</text>
</comment>
<gene>
    <name type="ordered locus">YPA_2977</name>
</gene>
<sequence length="95" mass="10687">MSDSLWHLYLLRTASGMLYTGITTDVARRLAQHQAGKGAKALRGKGELTLVFHCEAGDRSTALKLEYRVKQLSKQQKEKLVIDQPRLLTTLFLDS</sequence>
<dbReference type="EMBL" id="CP000308">
    <property type="protein sequence ID" value="ABG14939.1"/>
    <property type="molecule type" value="Genomic_DNA"/>
</dbReference>
<dbReference type="RefSeq" id="WP_002209274.1">
    <property type="nucleotide sequence ID" value="NZ_CP009906.1"/>
</dbReference>
<dbReference type="SMR" id="Q1C3N3"/>
<dbReference type="KEGG" id="ypa:YPA_2977"/>
<dbReference type="Proteomes" id="UP000001971">
    <property type="component" value="Chromosome"/>
</dbReference>
<dbReference type="CDD" id="cd10456">
    <property type="entry name" value="GIY-YIG_UPF0213"/>
    <property type="match status" value="1"/>
</dbReference>
<dbReference type="Gene3D" id="3.40.1440.10">
    <property type="entry name" value="GIY-YIG endonuclease"/>
    <property type="match status" value="1"/>
</dbReference>
<dbReference type="HAMAP" id="MF_01029">
    <property type="entry name" value="UPF0213"/>
    <property type="match status" value="1"/>
</dbReference>
<dbReference type="InterPro" id="IPR000305">
    <property type="entry name" value="GIY-YIG_endonuc"/>
</dbReference>
<dbReference type="InterPro" id="IPR035901">
    <property type="entry name" value="GIY-YIG_endonuc_sf"/>
</dbReference>
<dbReference type="InterPro" id="IPR050190">
    <property type="entry name" value="UPF0213_domain"/>
</dbReference>
<dbReference type="InterPro" id="IPR022992">
    <property type="entry name" value="UPF0213_GIY-YIG_endonuc"/>
</dbReference>
<dbReference type="PANTHER" id="PTHR34477">
    <property type="entry name" value="UPF0213 PROTEIN YHBQ"/>
    <property type="match status" value="1"/>
</dbReference>
<dbReference type="PANTHER" id="PTHR34477:SF1">
    <property type="entry name" value="UPF0213 PROTEIN YHBQ"/>
    <property type="match status" value="1"/>
</dbReference>
<dbReference type="Pfam" id="PF01541">
    <property type="entry name" value="GIY-YIG"/>
    <property type="match status" value="1"/>
</dbReference>
<dbReference type="SUPFAM" id="SSF82771">
    <property type="entry name" value="GIY-YIG endonuclease"/>
    <property type="match status" value="1"/>
</dbReference>
<dbReference type="PROSITE" id="PS50164">
    <property type="entry name" value="GIY_YIG"/>
    <property type="match status" value="1"/>
</dbReference>
<reference key="1">
    <citation type="journal article" date="2006" name="J. Bacteriol.">
        <title>Complete genome sequence of Yersinia pestis strains Antiqua and Nepal516: evidence of gene reduction in an emerging pathogen.</title>
        <authorList>
            <person name="Chain P.S.G."/>
            <person name="Hu P."/>
            <person name="Malfatti S.A."/>
            <person name="Radnedge L."/>
            <person name="Larimer F."/>
            <person name="Vergez L.M."/>
            <person name="Worsham P."/>
            <person name="Chu M.C."/>
            <person name="Andersen G.L."/>
        </authorList>
    </citation>
    <scope>NUCLEOTIDE SEQUENCE [LARGE SCALE GENOMIC DNA]</scope>
    <source>
        <strain>Antiqua</strain>
    </source>
</reference>
<feature type="chain" id="PRO_1000063703" description="UPF0213 protein YPA_2977">
    <location>
        <begin position="1"/>
        <end position="95"/>
    </location>
</feature>
<feature type="domain" description="GIY-YIG" evidence="1">
    <location>
        <begin position="4"/>
        <end position="79"/>
    </location>
</feature>
<evidence type="ECO:0000255" key="1">
    <source>
        <dbReference type="HAMAP-Rule" id="MF_01029"/>
    </source>
</evidence>